<gene>
    <name type="ordered locus">At1g47710</name>
    <name type="ORF">F16N3.3</name>
    <name type="ORF">T2E6.22</name>
</gene>
<reference key="1">
    <citation type="journal article" date="2000" name="Nature">
        <title>Sequence and analysis of chromosome 1 of the plant Arabidopsis thaliana.</title>
        <authorList>
            <person name="Theologis A."/>
            <person name="Ecker J.R."/>
            <person name="Palm C.J."/>
            <person name="Federspiel N.A."/>
            <person name="Kaul S."/>
            <person name="White O."/>
            <person name="Alonso J."/>
            <person name="Altafi H."/>
            <person name="Araujo R."/>
            <person name="Bowman C.L."/>
            <person name="Brooks S.Y."/>
            <person name="Buehler E."/>
            <person name="Chan A."/>
            <person name="Chao Q."/>
            <person name="Chen H."/>
            <person name="Cheuk R.F."/>
            <person name="Chin C.W."/>
            <person name="Chung M.K."/>
            <person name="Conn L."/>
            <person name="Conway A.B."/>
            <person name="Conway A.R."/>
            <person name="Creasy T.H."/>
            <person name="Dewar K."/>
            <person name="Dunn P."/>
            <person name="Etgu P."/>
            <person name="Feldblyum T.V."/>
            <person name="Feng J.-D."/>
            <person name="Fong B."/>
            <person name="Fujii C.Y."/>
            <person name="Gill J.E."/>
            <person name="Goldsmith A.D."/>
            <person name="Haas B."/>
            <person name="Hansen N.F."/>
            <person name="Hughes B."/>
            <person name="Huizar L."/>
            <person name="Hunter J.L."/>
            <person name="Jenkins J."/>
            <person name="Johnson-Hopson C."/>
            <person name="Khan S."/>
            <person name="Khaykin E."/>
            <person name="Kim C.J."/>
            <person name="Koo H.L."/>
            <person name="Kremenetskaia I."/>
            <person name="Kurtz D.B."/>
            <person name="Kwan A."/>
            <person name="Lam B."/>
            <person name="Langin-Hooper S."/>
            <person name="Lee A."/>
            <person name="Lee J.M."/>
            <person name="Lenz C.A."/>
            <person name="Li J.H."/>
            <person name="Li Y.-P."/>
            <person name="Lin X."/>
            <person name="Liu S.X."/>
            <person name="Liu Z.A."/>
            <person name="Luros J.S."/>
            <person name="Maiti R."/>
            <person name="Marziali A."/>
            <person name="Militscher J."/>
            <person name="Miranda M."/>
            <person name="Nguyen M."/>
            <person name="Nierman W.C."/>
            <person name="Osborne B.I."/>
            <person name="Pai G."/>
            <person name="Peterson J."/>
            <person name="Pham P.K."/>
            <person name="Rizzo M."/>
            <person name="Rooney T."/>
            <person name="Rowley D."/>
            <person name="Sakano H."/>
            <person name="Salzberg S.L."/>
            <person name="Schwartz J.R."/>
            <person name="Shinn P."/>
            <person name="Southwick A.M."/>
            <person name="Sun H."/>
            <person name="Tallon L.J."/>
            <person name="Tambunga G."/>
            <person name="Toriumi M.J."/>
            <person name="Town C.D."/>
            <person name="Utterback T."/>
            <person name="Van Aken S."/>
            <person name="Vaysberg M."/>
            <person name="Vysotskaia V.S."/>
            <person name="Walker M."/>
            <person name="Wu D."/>
            <person name="Yu G."/>
            <person name="Fraser C.M."/>
            <person name="Venter J.C."/>
            <person name="Davis R.W."/>
        </authorList>
    </citation>
    <scope>NUCLEOTIDE SEQUENCE [LARGE SCALE GENOMIC DNA]</scope>
    <source>
        <strain>cv. Columbia</strain>
    </source>
</reference>
<reference key="2">
    <citation type="journal article" date="2017" name="Plant J.">
        <title>Araport11: a complete reannotation of the Arabidopsis thaliana reference genome.</title>
        <authorList>
            <person name="Cheng C.Y."/>
            <person name="Krishnakumar V."/>
            <person name="Chan A.P."/>
            <person name="Thibaud-Nissen F."/>
            <person name="Schobel S."/>
            <person name="Town C.D."/>
        </authorList>
    </citation>
    <scope>GENOME REANNOTATION</scope>
    <source>
        <strain>cv. Columbia</strain>
    </source>
</reference>
<reference key="3">
    <citation type="journal article" date="2003" name="Science">
        <title>Empirical analysis of transcriptional activity in the Arabidopsis genome.</title>
        <authorList>
            <person name="Yamada K."/>
            <person name="Lim J."/>
            <person name="Dale J.M."/>
            <person name="Chen H."/>
            <person name="Shinn P."/>
            <person name="Palm C.J."/>
            <person name="Southwick A.M."/>
            <person name="Wu H.C."/>
            <person name="Kim C.J."/>
            <person name="Nguyen M."/>
            <person name="Pham P.K."/>
            <person name="Cheuk R.F."/>
            <person name="Karlin-Newmann G."/>
            <person name="Liu S.X."/>
            <person name="Lam B."/>
            <person name="Sakano H."/>
            <person name="Wu T."/>
            <person name="Yu G."/>
            <person name="Miranda M."/>
            <person name="Quach H.L."/>
            <person name="Tripp M."/>
            <person name="Chang C.H."/>
            <person name="Lee J.M."/>
            <person name="Toriumi M.J."/>
            <person name="Chan M.M."/>
            <person name="Tang C.C."/>
            <person name="Onodera C.S."/>
            <person name="Deng J.M."/>
            <person name="Akiyama K."/>
            <person name="Ansari Y."/>
            <person name="Arakawa T."/>
            <person name="Banh J."/>
            <person name="Banno F."/>
            <person name="Bowser L."/>
            <person name="Brooks S.Y."/>
            <person name="Carninci P."/>
            <person name="Chao Q."/>
            <person name="Choy N."/>
            <person name="Enju A."/>
            <person name="Goldsmith A.D."/>
            <person name="Gurjal M."/>
            <person name="Hansen N.F."/>
            <person name="Hayashizaki Y."/>
            <person name="Johnson-Hopson C."/>
            <person name="Hsuan V.W."/>
            <person name="Iida K."/>
            <person name="Karnes M."/>
            <person name="Khan S."/>
            <person name="Koesema E."/>
            <person name="Ishida J."/>
            <person name="Jiang P.X."/>
            <person name="Jones T."/>
            <person name="Kawai J."/>
            <person name="Kamiya A."/>
            <person name="Meyers C."/>
            <person name="Nakajima M."/>
            <person name="Narusaka M."/>
            <person name="Seki M."/>
            <person name="Sakurai T."/>
            <person name="Satou M."/>
            <person name="Tamse R."/>
            <person name="Vaysberg M."/>
            <person name="Wallender E.K."/>
            <person name="Wong C."/>
            <person name="Yamamura Y."/>
            <person name="Yuan S."/>
            <person name="Shinozaki K."/>
            <person name="Davis R.W."/>
            <person name="Theologis A."/>
            <person name="Ecker J.R."/>
        </authorList>
    </citation>
    <scope>NUCLEOTIDE SEQUENCE [LARGE SCALE MRNA]</scope>
    <source>
        <strain>cv. Columbia</strain>
    </source>
</reference>
<reference key="4">
    <citation type="journal article" date="2005" name="Proteomics">
        <title>Proteome analysis of Arabidopsis thaliana by two-dimensional gel electrophoresis and matrix-assisted laser desorption/ionisation-time of flight mass spectrometry.</title>
        <authorList>
            <person name="Giavalisco P."/>
            <person name="Nordhoff E."/>
            <person name="Kreitler T."/>
            <person name="Kloeppel K.-D."/>
            <person name="Lehrach H."/>
            <person name="Klose J."/>
            <person name="Gobom J."/>
        </authorList>
    </citation>
    <scope>TISSUE SPECIFICITY</scope>
</reference>
<reference key="5">
    <citation type="journal article" date="2006" name="J. Mol. Biol.">
        <title>Serpin1 of Arabidopsis thaliana is a suicide inhibitor for metacaspase 9.</title>
        <authorList>
            <person name="Vercammen D."/>
            <person name="Belenghi B."/>
            <person name="van de Cotte B."/>
            <person name="Beunens T."/>
            <person name="Gavigan J.-A."/>
            <person name="De Rycke R."/>
            <person name="Brackenier A."/>
            <person name="Inze D."/>
            <person name="Harris J.L."/>
            <person name="van Breusegem F."/>
        </authorList>
    </citation>
    <scope>FUNCTION</scope>
    <scope>SUBCELLULAR LOCATION</scope>
    <scope>TISSUE SPECIFICITY</scope>
    <scope>MUTAGENESIS OF ARG-351 AND 348-ILE--LEU-350</scope>
</reference>
<reference key="6">
    <citation type="journal article" date="2008" name="Funct. Integr. Genomics">
        <title>Serpins in plants and green algae.</title>
        <authorList>
            <person name="Roberts T.H."/>
            <person name="Hejgaard J."/>
        </authorList>
    </citation>
    <scope>GENE FAMILY</scope>
    <scope>NOMENCLATURE</scope>
</reference>
<reference key="7">
    <citation type="journal article" date="2013" name="Plant J.">
        <title>Set-point control of RD21 protease activity by AtSerpin1 controls cell death in Arabidopsis.</title>
        <authorList>
            <person name="Lampl N."/>
            <person name="Alkan N."/>
            <person name="Davydov O."/>
            <person name="Fluhr R."/>
        </authorList>
    </citation>
    <scope>FUNCTION</scope>
    <scope>SUBCELLULAR LOCATION</scope>
    <scope>INTERACTION WITH RD21A</scope>
</reference>
<reference key="8">
    <citation type="journal article" date="2016" name="Plant Physiol.">
        <title>Singlet oxygen induced membrane disruption and serpin-protease balance in vacuolar driven cell death in Arabidopsis thaliana.</title>
        <authorList>
            <person name="Koh E."/>
            <person name="Carmieli R."/>
            <person name="Mor A."/>
            <person name="Fluhr R."/>
        </authorList>
    </citation>
    <scope>FUNCTION</scope>
</reference>
<reference key="9">
    <citation type="journal article" date="2010" name="J. Biol. Chem.">
        <title>Arabidopsis AtSerpin1, crystal structure and in vivo interaction with its target protease RESPONSIVE TO DESICCATION-21 (RD21).</title>
        <authorList>
            <person name="Lampl N."/>
            <person name="Budai-Hadrian O."/>
            <person name="Davydov O."/>
            <person name="Joss T.V."/>
            <person name="Harrop S.J."/>
            <person name="Curmi P.M."/>
            <person name="Roberts T.H."/>
            <person name="Fluhr R."/>
        </authorList>
    </citation>
    <scope>X-RAY CRYSTALLOGRAPHY (2.20 ANGSTROMS)</scope>
    <scope>INTERACTION WITH RD21A</scope>
</reference>
<feature type="chain" id="PRO_0000334552" description="Serpin-ZX">
    <location>
        <begin position="1"/>
        <end position="391"/>
    </location>
</feature>
<feature type="region of interest" description="RCL">
    <location>
        <begin position="337"/>
        <end position="361"/>
    </location>
</feature>
<feature type="site" description="Reactive bond">
    <location>
        <begin position="351"/>
        <end position="352"/>
    </location>
</feature>
<feature type="glycosylation site" description="N-linked (GlcNAc...) asparagine" evidence="2">
    <location>
        <position position="375"/>
    </location>
</feature>
<feature type="mutagenesis site" description="Slightly less efficient in metacaspase-9 inhibition." evidence="4">
    <original>IKL</original>
    <variation>VRP</variation>
    <location>
        <begin position="348"/>
        <end position="350"/>
    </location>
</feature>
<feature type="mutagenesis site" description="Much less efficient in metacaspase-9 inhibition." evidence="4">
    <original>R</original>
    <variation>A</variation>
    <location>
        <position position="351"/>
    </location>
</feature>
<feature type="mutagenesis site" description="Slightly more efficient in metacaspase-9 inhibition." evidence="4">
    <original>R</original>
    <variation>K</variation>
    <location>
        <position position="351"/>
    </location>
</feature>
<feature type="helix" evidence="9">
    <location>
        <begin position="3"/>
        <end position="23"/>
    </location>
</feature>
<feature type="strand" evidence="9">
    <location>
        <begin position="31"/>
        <end position="33"/>
    </location>
</feature>
<feature type="helix" evidence="9">
    <location>
        <begin position="35"/>
        <end position="47"/>
    </location>
</feature>
<feature type="helix" evidence="9">
    <location>
        <begin position="52"/>
        <end position="61"/>
    </location>
</feature>
<feature type="helix" evidence="9">
    <location>
        <begin position="66"/>
        <end position="75"/>
    </location>
</feature>
<feature type="helix" evidence="9">
    <location>
        <begin position="77"/>
        <end position="81"/>
    </location>
</feature>
<feature type="helix" evidence="9">
    <location>
        <begin position="85"/>
        <end position="87"/>
    </location>
</feature>
<feature type="strand" evidence="9">
    <location>
        <begin position="91"/>
        <end position="101"/>
    </location>
</feature>
<feature type="helix" evidence="9">
    <location>
        <begin position="108"/>
        <end position="117"/>
    </location>
</feature>
<feature type="strand" evidence="9">
    <location>
        <begin position="121"/>
        <end position="125"/>
    </location>
</feature>
<feature type="helix" evidence="9">
    <location>
        <begin position="127"/>
        <end position="145"/>
    </location>
</feature>
<feature type="turn" evidence="9">
    <location>
        <begin position="146"/>
        <end position="148"/>
    </location>
</feature>
<feature type="strand" evidence="9">
    <location>
        <begin position="165"/>
        <end position="174"/>
    </location>
</feature>
<feature type="strand" evidence="9">
    <location>
        <begin position="177"/>
        <end position="179"/>
    </location>
</feature>
<feature type="helix" evidence="9">
    <location>
        <begin position="183"/>
        <end position="185"/>
    </location>
</feature>
<feature type="strand" evidence="9">
    <location>
        <begin position="187"/>
        <end position="192"/>
    </location>
</feature>
<feature type="strand" evidence="9">
    <location>
        <begin position="198"/>
        <end position="205"/>
    </location>
</feature>
<feature type="strand" evidence="9">
    <location>
        <begin position="210"/>
        <end position="215"/>
    </location>
</feature>
<feature type="strand" evidence="9">
    <location>
        <begin position="218"/>
        <end position="225"/>
    </location>
</feature>
<feature type="strand" evidence="9">
    <location>
        <begin position="234"/>
        <end position="243"/>
    </location>
</feature>
<feature type="helix" evidence="9">
    <location>
        <begin position="247"/>
        <end position="256"/>
    </location>
</feature>
<feature type="turn" evidence="9">
    <location>
        <begin position="258"/>
        <end position="260"/>
    </location>
</feature>
<feature type="helix" evidence="9">
    <location>
        <begin position="261"/>
        <end position="263"/>
    </location>
</feature>
<feature type="strand" evidence="9">
    <location>
        <begin position="268"/>
        <end position="278"/>
    </location>
</feature>
<feature type="strand" evidence="9">
    <location>
        <begin position="280"/>
        <end position="287"/>
    </location>
</feature>
<feature type="helix" evidence="9">
    <location>
        <begin position="289"/>
        <end position="294"/>
    </location>
</feature>
<feature type="helix" evidence="9">
    <location>
        <begin position="299"/>
        <end position="301"/>
    </location>
</feature>
<feature type="turn" evidence="9">
    <location>
        <begin position="303"/>
        <end position="305"/>
    </location>
</feature>
<feature type="turn" evidence="9">
    <location>
        <begin position="308"/>
        <end position="310"/>
    </location>
</feature>
<feature type="helix" evidence="9">
    <location>
        <begin position="314"/>
        <end position="317"/>
    </location>
</feature>
<feature type="strand" evidence="9">
    <location>
        <begin position="324"/>
        <end position="333"/>
    </location>
</feature>
<feature type="helix" evidence="9">
    <location>
        <begin position="347"/>
        <end position="351"/>
    </location>
</feature>
<feature type="turn" evidence="9">
    <location>
        <begin position="352"/>
        <end position="354"/>
    </location>
</feature>
<feature type="strand" evidence="9">
    <location>
        <begin position="359"/>
        <end position="363"/>
    </location>
</feature>
<feature type="strand" evidence="9">
    <location>
        <begin position="368"/>
        <end position="374"/>
    </location>
</feature>
<feature type="turn" evidence="9">
    <location>
        <begin position="375"/>
        <end position="377"/>
    </location>
</feature>
<feature type="strand" evidence="9">
    <location>
        <begin position="380"/>
        <end position="387"/>
    </location>
</feature>
<keyword id="KW-0002">3D-structure</keyword>
<keyword id="KW-0052">Apoplast</keyword>
<keyword id="KW-0963">Cytoplasm</keyword>
<keyword id="KW-0325">Glycoprotein</keyword>
<keyword id="KW-0646">Protease inhibitor</keyword>
<keyword id="KW-1185">Reference proteome</keyword>
<keyword id="KW-0964">Secreted</keyword>
<keyword id="KW-0722">Serine protease inhibitor</keyword>
<keyword id="KW-0789">Thiol protease inhibitor</keyword>
<accession>Q9S7T8</accession>
<name>SPZX_ARATH</name>
<sequence length="391" mass="42639">MDVRESISLQNQVSMNLAKHVITTVSQNSNVIFSPASINVVLSIIAAGSAGATKDQILSFLKFSSTDQLNSFSSEIVSAVLADGSANGGPKLSVANGAWIDKSLSFKPSFKQLLEDSYKAASNQADFQSKAVEVIAEVNSWAEKETNGLITEVLPEGSADSMTKLIFANALYFKGTWNEKFDESLTQEGEFHLLDGNKVTAPFMTSKKKQYVSAYDGFKVLGLPYLQGQDKRQFSMYFYLPDANNGLSDLLDKIVSTPGFLDNHIPRRQVKVREFKIPKFKFSFGFDASNVLKGLGLTSPFSGEEGLTEMVESPEMGKNLCVSNIFHKACIEVNEEGTEAAAASAGVIKLRGLLMEEDEIDFVADHPFLLVVTENITGVVLFIGQVVDPLH</sequence>
<proteinExistence type="evidence at protein level"/>
<comment type="function">
    <text evidence="4 6 7">Inhibits metacaspase-9 (MC9) cysteine protease. Functions through cleavage of its reactive center loop and covalent binding to MC9. Involved in the control of elicitor-stimulated programmed cell death (PCD). During infection by the necrotrophic fungal pathogen Botrytis cinerea, functions to protect cells by limiting the PCD-promoting protease RD21A activity that is released from the ER body or vacuole to the cytoplasm (PubMed:23398119). Involved in the control of water stress-induced cell death by limiting the pro-death protease RD21A activity that is released from the vacuole to the cytoplasm (PubMed:26884487).</text>
</comment>
<comment type="subunit">
    <text evidence="5 6">Interacts with RD21A.</text>
</comment>
<comment type="subcellular location">
    <subcellularLocation>
        <location evidence="4">Secreted</location>
        <location evidence="4">Extracellular space</location>
        <location evidence="4">Apoplast</location>
    </subcellularLocation>
    <subcellularLocation>
        <location evidence="6">Cytoplasm</location>
    </subcellularLocation>
</comment>
<comment type="tissue specificity">
    <text evidence="3 4">Expressed in root tips. Expressed in siliques (at protein level).</text>
</comment>
<comment type="domain">
    <text evidence="1">The reactive center loop (RCL) extends out from the body of the protein and directs binding to the target protease. The protease cleaves the serpin at the reactive site within the RCL, establishing a covalent linkage between the carboxyl group of the serpin reactive site and the serine hydroxyl of the protease. The resulting inactive serpin-protease complex is highly stable (By similarity).</text>
</comment>
<comment type="similarity">
    <text evidence="8">Belongs to the serpin family.</text>
</comment>
<organism>
    <name type="scientific">Arabidopsis thaliana</name>
    <name type="common">Mouse-ear cress</name>
    <dbReference type="NCBI Taxonomy" id="3702"/>
    <lineage>
        <taxon>Eukaryota</taxon>
        <taxon>Viridiplantae</taxon>
        <taxon>Streptophyta</taxon>
        <taxon>Embryophyta</taxon>
        <taxon>Tracheophyta</taxon>
        <taxon>Spermatophyta</taxon>
        <taxon>Magnoliopsida</taxon>
        <taxon>eudicotyledons</taxon>
        <taxon>Gunneridae</taxon>
        <taxon>Pentapetalae</taxon>
        <taxon>rosids</taxon>
        <taxon>malvids</taxon>
        <taxon>Brassicales</taxon>
        <taxon>Brassicaceae</taxon>
        <taxon>Camelineae</taxon>
        <taxon>Arabidopsis</taxon>
    </lineage>
</organism>
<dbReference type="EMBL" id="AC007519">
    <property type="protein sequence ID" value="AAD46018.1"/>
    <property type="molecule type" value="Genomic_DNA"/>
</dbReference>
<dbReference type="EMBL" id="AC012463">
    <property type="protein sequence ID" value="AAF99797.1"/>
    <property type="molecule type" value="Genomic_DNA"/>
</dbReference>
<dbReference type="EMBL" id="CP002684">
    <property type="protein sequence ID" value="AEE32203.1"/>
    <property type="molecule type" value="Genomic_DNA"/>
</dbReference>
<dbReference type="EMBL" id="BT002483">
    <property type="protein sequence ID" value="AAO00843.1"/>
    <property type="molecule type" value="mRNA"/>
</dbReference>
<dbReference type="EMBL" id="BT008481">
    <property type="protein sequence ID" value="AAP37840.1"/>
    <property type="molecule type" value="mRNA"/>
</dbReference>
<dbReference type="PIR" id="H96517">
    <property type="entry name" value="H96517"/>
</dbReference>
<dbReference type="RefSeq" id="NP_175202.1">
    <property type="nucleotide sequence ID" value="NM_103664.4"/>
</dbReference>
<dbReference type="PDB" id="3LE2">
    <property type="method" value="X-ray"/>
    <property type="resolution" value="2.20 A"/>
    <property type="chains" value="A=1-391"/>
</dbReference>
<dbReference type="PDBsum" id="3LE2"/>
<dbReference type="SMR" id="Q9S7T8"/>
<dbReference type="BioGRID" id="26407">
    <property type="interactions" value="1"/>
</dbReference>
<dbReference type="FunCoup" id="Q9S7T8">
    <property type="interactions" value="562"/>
</dbReference>
<dbReference type="STRING" id="3702.Q9S7T8"/>
<dbReference type="MEROPS" id="I04.087"/>
<dbReference type="GlyGen" id="Q9S7T8">
    <property type="glycosylation" value="1 site"/>
</dbReference>
<dbReference type="iPTMnet" id="Q9S7T8"/>
<dbReference type="PaxDb" id="3702-AT1G47710.1"/>
<dbReference type="ProteomicsDB" id="226761"/>
<dbReference type="EnsemblPlants" id="AT1G47710.1">
    <property type="protein sequence ID" value="AT1G47710.1"/>
    <property type="gene ID" value="AT1G47710"/>
</dbReference>
<dbReference type="GeneID" id="841182"/>
<dbReference type="Gramene" id="AT1G47710.1">
    <property type="protein sequence ID" value="AT1G47710.1"/>
    <property type="gene ID" value="AT1G47710"/>
</dbReference>
<dbReference type="KEGG" id="ath:AT1G47710"/>
<dbReference type="Araport" id="AT1G47710"/>
<dbReference type="TAIR" id="AT1G47710">
    <property type="gene designation" value="SERPIN1"/>
</dbReference>
<dbReference type="eggNOG" id="KOG2392">
    <property type="taxonomic scope" value="Eukaryota"/>
</dbReference>
<dbReference type="HOGENOM" id="CLU_023330_4_0_1"/>
<dbReference type="InParanoid" id="Q9S7T8"/>
<dbReference type="OrthoDB" id="1063785at2759"/>
<dbReference type="PhylomeDB" id="Q9S7T8"/>
<dbReference type="EvolutionaryTrace" id="Q9S7T8"/>
<dbReference type="PRO" id="PR:Q9S7T8"/>
<dbReference type="Proteomes" id="UP000006548">
    <property type="component" value="Chromosome 1"/>
</dbReference>
<dbReference type="ExpressionAtlas" id="Q9S7T8">
    <property type="expression patterns" value="baseline and differential"/>
</dbReference>
<dbReference type="GO" id="GO:0048046">
    <property type="term" value="C:apoplast"/>
    <property type="evidence" value="ECO:0000314"/>
    <property type="project" value="TAIR"/>
</dbReference>
<dbReference type="GO" id="GO:0005737">
    <property type="term" value="C:cytoplasm"/>
    <property type="evidence" value="ECO:0000314"/>
    <property type="project" value="UniProtKB"/>
</dbReference>
<dbReference type="GO" id="GO:0005615">
    <property type="term" value="C:extracellular space"/>
    <property type="evidence" value="ECO:0007669"/>
    <property type="project" value="InterPro"/>
</dbReference>
<dbReference type="GO" id="GO:0004869">
    <property type="term" value="F:cysteine-type endopeptidase inhibitor activity"/>
    <property type="evidence" value="ECO:0000314"/>
    <property type="project" value="TAIR"/>
</dbReference>
<dbReference type="GO" id="GO:0004867">
    <property type="term" value="F:serine-type endopeptidase inhibitor activity"/>
    <property type="evidence" value="ECO:0007669"/>
    <property type="project" value="UniProtKB-KW"/>
</dbReference>
<dbReference type="CDD" id="cd02043">
    <property type="entry name" value="serpinP_plants"/>
    <property type="match status" value="1"/>
</dbReference>
<dbReference type="FunFam" id="2.30.39.10:FF:000022">
    <property type="entry name" value="Os11g0230400 protein"/>
    <property type="match status" value="1"/>
</dbReference>
<dbReference type="FunFam" id="3.30.497.10:FF:000012">
    <property type="entry name" value="Predicted protein"/>
    <property type="match status" value="1"/>
</dbReference>
<dbReference type="Gene3D" id="2.30.39.10">
    <property type="entry name" value="Alpha-1-antitrypsin, domain 1"/>
    <property type="match status" value="1"/>
</dbReference>
<dbReference type="Gene3D" id="3.30.497.10">
    <property type="entry name" value="Antithrombin, subunit I, domain 2"/>
    <property type="match status" value="1"/>
</dbReference>
<dbReference type="InterPro" id="IPR023795">
    <property type="entry name" value="Serpin_CS"/>
</dbReference>
<dbReference type="InterPro" id="IPR023796">
    <property type="entry name" value="Serpin_dom"/>
</dbReference>
<dbReference type="InterPro" id="IPR000215">
    <property type="entry name" value="Serpin_fam"/>
</dbReference>
<dbReference type="InterPro" id="IPR036186">
    <property type="entry name" value="Serpin_sf"/>
</dbReference>
<dbReference type="InterPro" id="IPR042178">
    <property type="entry name" value="Serpin_sf_1"/>
</dbReference>
<dbReference type="InterPro" id="IPR042185">
    <property type="entry name" value="Serpin_sf_2"/>
</dbReference>
<dbReference type="PANTHER" id="PTHR11461:SF211">
    <property type="entry name" value="GH10112P-RELATED"/>
    <property type="match status" value="1"/>
</dbReference>
<dbReference type="PANTHER" id="PTHR11461">
    <property type="entry name" value="SERINE PROTEASE INHIBITOR, SERPIN"/>
    <property type="match status" value="1"/>
</dbReference>
<dbReference type="Pfam" id="PF00079">
    <property type="entry name" value="Serpin"/>
    <property type="match status" value="1"/>
</dbReference>
<dbReference type="SMART" id="SM00093">
    <property type="entry name" value="SERPIN"/>
    <property type="match status" value="1"/>
</dbReference>
<dbReference type="SUPFAM" id="SSF56574">
    <property type="entry name" value="Serpins"/>
    <property type="match status" value="1"/>
</dbReference>
<dbReference type="PROSITE" id="PS00284">
    <property type="entry name" value="SERPIN"/>
    <property type="match status" value="1"/>
</dbReference>
<protein>
    <recommendedName>
        <fullName>Serpin-ZX</fullName>
    </recommendedName>
    <alternativeName>
        <fullName>ArathZx</fullName>
    </alternativeName>
    <alternativeName>
        <fullName>AtSerpin1</fullName>
    </alternativeName>
    <alternativeName>
        <fullName>Serpin-1</fullName>
    </alternativeName>
</protein>
<evidence type="ECO:0000250" key="1"/>
<evidence type="ECO:0000255" key="2">
    <source>
        <dbReference type="PROSITE-ProRule" id="PRU00498"/>
    </source>
</evidence>
<evidence type="ECO:0000269" key="3">
    <source>
    </source>
</evidence>
<evidence type="ECO:0000269" key="4">
    <source>
    </source>
</evidence>
<evidence type="ECO:0000269" key="5">
    <source>
    </source>
</evidence>
<evidence type="ECO:0000269" key="6">
    <source>
    </source>
</evidence>
<evidence type="ECO:0000269" key="7">
    <source>
    </source>
</evidence>
<evidence type="ECO:0000305" key="8"/>
<evidence type="ECO:0007829" key="9">
    <source>
        <dbReference type="PDB" id="3LE2"/>
    </source>
</evidence>